<proteinExistence type="inferred from homology"/>
<feature type="chain" id="PRO_0000109437" description="Pyridoxal 5'-phosphate synthase subunit PdxS">
    <location>
        <begin position="1"/>
        <end position="301"/>
    </location>
</feature>
<feature type="active site" description="Schiff-base intermediate with D-ribose 5-phosphate" evidence="1">
    <location>
        <position position="88"/>
    </location>
</feature>
<feature type="binding site" evidence="1">
    <location>
        <position position="31"/>
    </location>
    <ligand>
        <name>D-ribose 5-phosphate</name>
        <dbReference type="ChEBI" id="CHEBI:78346"/>
    </ligand>
</feature>
<feature type="binding site" evidence="1">
    <location>
        <position position="160"/>
    </location>
    <ligand>
        <name>D-ribose 5-phosphate</name>
        <dbReference type="ChEBI" id="CHEBI:78346"/>
    </ligand>
</feature>
<feature type="binding site" evidence="1">
    <location>
        <position position="172"/>
    </location>
    <ligand>
        <name>D-glyceraldehyde 3-phosphate</name>
        <dbReference type="ChEBI" id="CHEBI:59776"/>
    </ligand>
</feature>
<feature type="binding site" evidence="1">
    <location>
        <position position="221"/>
    </location>
    <ligand>
        <name>D-ribose 5-phosphate</name>
        <dbReference type="ChEBI" id="CHEBI:78346"/>
    </ligand>
</feature>
<feature type="binding site" evidence="1">
    <location>
        <begin position="242"/>
        <end position="243"/>
    </location>
    <ligand>
        <name>D-ribose 5-phosphate</name>
        <dbReference type="ChEBI" id="CHEBI:78346"/>
    </ligand>
</feature>
<sequence length="301" mass="32250">MTFMEFEKLRHGTELIKRGFARMQKGGVIMDVTTPEQARIAEEAGAVAVMALQAVPADLRKAGGVARMADPEIVQQIIDTVTIPVMAKARIGHFVEAEILEALGVDMVDESEVLTPADPFYHIDKTQFTVPFVCGARNLGEALRRINEGAAMIRTKGEAGTGDVSQAVKHMKQIQGEIRALAGKTKEELIMVAREIEAPIELVVETAKMQRLPVVNFAAGGVATPADAALMMRLGADGVFVGSGIFKAENPEKMAKAVVEAVNNYDNPAKLAEISKGVGAGMKGISADMIPVQEALQERGW</sequence>
<gene>
    <name evidence="1" type="primary">pdxS</name>
    <name type="ordered locus">MM_2432</name>
</gene>
<name>PDXS_METMA</name>
<protein>
    <recommendedName>
        <fullName evidence="1">Pyridoxal 5'-phosphate synthase subunit PdxS</fullName>
        <shortName evidence="1">PLP synthase subunit PdxS</shortName>
        <ecNumber evidence="1">4.3.3.6</ecNumber>
    </recommendedName>
    <alternativeName>
        <fullName evidence="1">Pdx1</fullName>
    </alternativeName>
</protein>
<comment type="function">
    <text evidence="1">Catalyzes the formation of pyridoxal 5'-phosphate from ribose 5-phosphate (RBP), glyceraldehyde 3-phosphate (G3P) and ammonia. The ammonia is provided by the PdxT subunit. Can also use ribulose 5-phosphate and dihydroxyacetone phosphate as substrates, resulting from enzyme-catalyzed isomerization of RBP and G3P, respectively.</text>
</comment>
<comment type="catalytic activity">
    <reaction evidence="1">
        <text>aldehydo-D-ribose 5-phosphate + D-glyceraldehyde 3-phosphate + L-glutamine = pyridoxal 5'-phosphate + L-glutamate + phosphate + 3 H2O + H(+)</text>
        <dbReference type="Rhea" id="RHEA:31507"/>
        <dbReference type="ChEBI" id="CHEBI:15377"/>
        <dbReference type="ChEBI" id="CHEBI:15378"/>
        <dbReference type="ChEBI" id="CHEBI:29985"/>
        <dbReference type="ChEBI" id="CHEBI:43474"/>
        <dbReference type="ChEBI" id="CHEBI:58273"/>
        <dbReference type="ChEBI" id="CHEBI:58359"/>
        <dbReference type="ChEBI" id="CHEBI:59776"/>
        <dbReference type="ChEBI" id="CHEBI:597326"/>
        <dbReference type="EC" id="4.3.3.6"/>
    </reaction>
</comment>
<comment type="pathway">
    <text evidence="1">Cofactor biosynthesis; pyridoxal 5'-phosphate biosynthesis.</text>
</comment>
<comment type="subunit">
    <text evidence="1">In the presence of PdxT, forms a dodecamer of heterodimers.</text>
</comment>
<comment type="similarity">
    <text evidence="1">Belongs to the PdxS/SNZ family.</text>
</comment>
<evidence type="ECO:0000255" key="1">
    <source>
        <dbReference type="HAMAP-Rule" id="MF_01824"/>
    </source>
</evidence>
<organism>
    <name type="scientific">Methanosarcina mazei (strain ATCC BAA-159 / DSM 3647 / Goe1 / Go1 / JCM 11833 / OCM 88)</name>
    <name type="common">Methanosarcina frisia</name>
    <dbReference type="NCBI Taxonomy" id="192952"/>
    <lineage>
        <taxon>Archaea</taxon>
        <taxon>Methanobacteriati</taxon>
        <taxon>Methanobacteriota</taxon>
        <taxon>Stenosarchaea group</taxon>
        <taxon>Methanomicrobia</taxon>
        <taxon>Methanosarcinales</taxon>
        <taxon>Methanosarcinaceae</taxon>
        <taxon>Methanosarcina</taxon>
    </lineage>
</organism>
<accession>Q8PUA5</accession>
<reference key="1">
    <citation type="journal article" date="2002" name="J. Mol. Microbiol. Biotechnol.">
        <title>The genome of Methanosarcina mazei: evidence for lateral gene transfer between Bacteria and Archaea.</title>
        <authorList>
            <person name="Deppenmeier U."/>
            <person name="Johann A."/>
            <person name="Hartsch T."/>
            <person name="Merkl R."/>
            <person name="Schmitz R.A."/>
            <person name="Martinez-Arias R."/>
            <person name="Henne A."/>
            <person name="Wiezer A."/>
            <person name="Baeumer S."/>
            <person name="Jacobi C."/>
            <person name="Brueggemann H."/>
            <person name="Lienard T."/>
            <person name="Christmann A."/>
            <person name="Boemecke M."/>
            <person name="Steckel S."/>
            <person name="Bhattacharyya A."/>
            <person name="Lykidis A."/>
            <person name="Overbeek R."/>
            <person name="Klenk H.-P."/>
            <person name="Gunsalus R.P."/>
            <person name="Fritz H.-J."/>
            <person name="Gottschalk G."/>
        </authorList>
    </citation>
    <scope>NUCLEOTIDE SEQUENCE [LARGE SCALE GENOMIC DNA]</scope>
    <source>
        <strain>ATCC BAA-159 / DSM 3647 / Goe1 / Go1 / JCM 11833 / OCM 88</strain>
    </source>
</reference>
<dbReference type="EC" id="4.3.3.6" evidence="1"/>
<dbReference type="EMBL" id="AE008384">
    <property type="protein sequence ID" value="AAM32128.1"/>
    <property type="molecule type" value="Genomic_DNA"/>
</dbReference>
<dbReference type="SMR" id="Q8PUA5"/>
<dbReference type="KEGG" id="mma:MM_2432"/>
<dbReference type="PATRIC" id="fig|192952.21.peg.2784"/>
<dbReference type="eggNOG" id="arCOG04075">
    <property type="taxonomic scope" value="Archaea"/>
</dbReference>
<dbReference type="HOGENOM" id="CLU_055352_1_0_2"/>
<dbReference type="UniPathway" id="UPA00245"/>
<dbReference type="Proteomes" id="UP000000595">
    <property type="component" value="Chromosome"/>
</dbReference>
<dbReference type="GO" id="GO:0036381">
    <property type="term" value="F:pyridoxal 5'-phosphate synthase (glutamine hydrolysing) activity"/>
    <property type="evidence" value="ECO:0007669"/>
    <property type="project" value="UniProtKB-UniRule"/>
</dbReference>
<dbReference type="GO" id="GO:0006520">
    <property type="term" value="P:amino acid metabolic process"/>
    <property type="evidence" value="ECO:0007669"/>
    <property type="project" value="TreeGrafter"/>
</dbReference>
<dbReference type="GO" id="GO:0042823">
    <property type="term" value="P:pyridoxal phosphate biosynthetic process"/>
    <property type="evidence" value="ECO:0007669"/>
    <property type="project" value="UniProtKB-UniRule"/>
</dbReference>
<dbReference type="GO" id="GO:0008615">
    <property type="term" value="P:pyridoxine biosynthetic process"/>
    <property type="evidence" value="ECO:0007669"/>
    <property type="project" value="TreeGrafter"/>
</dbReference>
<dbReference type="CDD" id="cd04727">
    <property type="entry name" value="pdxS"/>
    <property type="match status" value="1"/>
</dbReference>
<dbReference type="FunFam" id="3.20.20.70:FF:000374">
    <property type="entry name" value="Pyridoxal 5'-phosphate synthase subunit PdxS"/>
    <property type="match status" value="1"/>
</dbReference>
<dbReference type="Gene3D" id="3.20.20.70">
    <property type="entry name" value="Aldolase class I"/>
    <property type="match status" value="1"/>
</dbReference>
<dbReference type="HAMAP" id="MF_01824">
    <property type="entry name" value="PdxS"/>
    <property type="match status" value="1"/>
</dbReference>
<dbReference type="InterPro" id="IPR013785">
    <property type="entry name" value="Aldolase_TIM"/>
</dbReference>
<dbReference type="InterPro" id="IPR001852">
    <property type="entry name" value="PdxS/SNZ"/>
</dbReference>
<dbReference type="InterPro" id="IPR033755">
    <property type="entry name" value="PdxS/SNZ_N"/>
</dbReference>
<dbReference type="InterPro" id="IPR011060">
    <property type="entry name" value="RibuloseP-bd_barrel"/>
</dbReference>
<dbReference type="NCBIfam" id="NF003215">
    <property type="entry name" value="PRK04180.1"/>
    <property type="match status" value="1"/>
</dbReference>
<dbReference type="NCBIfam" id="TIGR00343">
    <property type="entry name" value="pyridoxal 5'-phosphate synthase lyase subunit PdxS"/>
    <property type="match status" value="1"/>
</dbReference>
<dbReference type="PANTHER" id="PTHR31829">
    <property type="entry name" value="PYRIDOXAL 5'-PHOSPHATE SYNTHASE SUBUNIT SNZ1-RELATED"/>
    <property type="match status" value="1"/>
</dbReference>
<dbReference type="PANTHER" id="PTHR31829:SF0">
    <property type="entry name" value="PYRIDOXAL 5'-PHOSPHATE SYNTHASE SUBUNIT SNZ1-RELATED"/>
    <property type="match status" value="1"/>
</dbReference>
<dbReference type="Pfam" id="PF01680">
    <property type="entry name" value="SOR_SNZ"/>
    <property type="match status" value="1"/>
</dbReference>
<dbReference type="PIRSF" id="PIRSF029271">
    <property type="entry name" value="Pdx1"/>
    <property type="match status" value="1"/>
</dbReference>
<dbReference type="SUPFAM" id="SSF51366">
    <property type="entry name" value="Ribulose-phoshate binding barrel"/>
    <property type="match status" value="1"/>
</dbReference>
<dbReference type="PROSITE" id="PS01235">
    <property type="entry name" value="PDXS_SNZ_1"/>
    <property type="match status" value="1"/>
</dbReference>
<dbReference type="PROSITE" id="PS51129">
    <property type="entry name" value="PDXS_SNZ_2"/>
    <property type="match status" value="1"/>
</dbReference>
<keyword id="KW-0456">Lyase</keyword>
<keyword id="KW-0663">Pyridoxal phosphate</keyword>
<keyword id="KW-0704">Schiff base</keyword>